<feature type="chain" id="PRO_0000255182" description="Lipid-A-disaccharide synthase">
    <location>
        <begin position="1"/>
        <end position="380"/>
    </location>
</feature>
<proteinExistence type="inferred from homology"/>
<organism>
    <name type="scientific">Francisella tularensis subsp. tularensis (strain SCHU S4 / Schu 4)</name>
    <dbReference type="NCBI Taxonomy" id="177416"/>
    <lineage>
        <taxon>Bacteria</taxon>
        <taxon>Pseudomonadati</taxon>
        <taxon>Pseudomonadota</taxon>
        <taxon>Gammaproteobacteria</taxon>
        <taxon>Thiotrichales</taxon>
        <taxon>Francisellaceae</taxon>
        <taxon>Francisella</taxon>
    </lineage>
</organism>
<gene>
    <name evidence="1" type="primary">lpxB</name>
    <name type="ordered locus">FTT_1568c</name>
</gene>
<keyword id="KW-0328">Glycosyltransferase</keyword>
<keyword id="KW-0441">Lipid A biosynthesis</keyword>
<keyword id="KW-0444">Lipid biosynthesis</keyword>
<keyword id="KW-0443">Lipid metabolism</keyword>
<keyword id="KW-1185">Reference proteome</keyword>
<keyword id="KW-0808">Transferase</keyword>
<reference key="1">
    <citation type="journal article" date="2005" name="Nat. Genet.">
        <title>The complete genome sequence of Francisella tularensis, the causative agent of tularemia.</title>
        <authorList>
            <person name="Larsson P."/>
            <person name="Oyston P.C.F."/>
            <person name="Chain P."/>
            <person name="Chu M.C."/>
            <person name="Duffield M."/>
            <person name="Fuxelius H.-H."/>
            <person name="Garcia E."/>
            <person name="Haelltorp G."/>
            <person name="Johansson D."/>
            <person name="Isherwood K.E."/>
            <person name="Karp P.D."/>
            <person name="Larsson E."/>
            <person name="Liu Y."/>
            <person name="Michell S."/>
            <person name="Prior J."/>
            <person name="Prior R."/>
            <person name="Malfatti S."/>
            <person name="Sjoestedt A."/>
            <person name="Svensson K."/>
            <person name="Thompson N."/>
            <person name="Vergez L."/>
            <person name="Wagg J.K."/>
            <person name="Wren B.W."/>
            <person name="Lindler L.E."/>
            <person name="Andersson S.G.E."/>
            <person name="Forsman M."/>
            <person name="Titball R.W."/>
        </authorList>
    </citation>
    <scope>NUCLEOTIDE SEQUENCE [LARGE SCALE GENOMIC DNA]</scope>
    <source>
        <strain>SCHU S4 / Schu 4</strain>
    </source>
</reference>
<protein>
    <recommendedName>
        <fullName evidence="1">Lipid-A-disaccharide synthase</fullName>
        <ecNumber evidence="1">2.4.1.182</ecNumber>
    </recommendedName>
</protein>
<accession>Q5NEQ2</accession>
<comment type="function">
    <text evidence="1">Condensation of UDP-2,3-diacylglucosamine and 2,3-diacylglucosamine-1-phosphate to form lipid A disaccharide, a precursor of lipid A, a phosphorylated glycolipid that anchors the lipopolysaccharide to the outer membrane of the cell.</text>
</comment>
<comment type="catalytic activity">
    <reaction evidence="1">
        <text>a lipid X + a UDP-2-N,3-O-bis[(3R)-3-hydroxyacyl]-alpha-D-glucosamine = a lipid A disaccharide + UDP + H(+)</text>
        <dbReference type="Rhea" id="RHEA:67828"/>
        <dbReference type="ChEBI" id="CHEBI:15378"/>
        <dbReference type="ChEBI" id="CHEBI:58223"/>
        <dbReference type="ChEBI" id="CHEBI:137748"/>
        <dbReference type="ChEBI" id="CHEBI:176338"/>
        <dbReference type="ChEBI" id="CHEBI:176343"/>
        <dbReference type="EC" id="2.4.1.182"/>
    </reaction>
</comment>
<comment type="pathway">
    <text evidence="1">Bacterial outer membrane biogenesis; LPS lipid A biosynthesis.</text>
</comment>
<comment type="similarity">
    <text evidence="1">Belongs to the LpxB family.</text>
</comment>
<name>LPXB_FRATT</name>
<dbReference type="EC" id="2.4.1.182" evidence="1"/>
<dbReference type="EMBL" id="AJ749949">
    <property type="protein sequence ID" value="CAG46201.1"/>
    <property type="molecule type" value="Genomic_DNA"/>
</dbReference>
<dbReference type="RefSeq" id="WP_003014884.1">
    <property type="nucleotide sequence ID" value="NZ_CP010290.1"/>
</dbReference>
<dbReference type="RefSeq" id="YP_170490.1">
    <property type="nucleotide sequence ID" value="NC_006570.2"/>
</dbReference>
<dbReference type="SMR" id="Q5NEQ2"/>
<dbReference type="STRING" id="177416.FTT_1568c"/>
<dbReference type="CAZy" id="GT19">
    <property type="family name" value="Glycosyltransferase Family 19"/>
</dbReference>
<dbReference type="DNASU" id="3191793"/>
<dbReference type="EnsemblBacteria" id="CAG46201">
    <property type="protein sequence ID" value="CAG46201"/>
    <property type="gene ID" value="FTT_1568c"/>
</dbReference>
<dbReference type="KEGG" id="ftu:FTT_1568c"/>
<dbReference type="eggNOG" id="COG0763">
    <property type="taxonomic scope" value="Bacteria"/>
</dbReference>
<dbReference type="OrthoDB" id="9801642at2"/>
<dbReference type="UniPathway" id="UPA00973"/>
<dbReference type="Proteomes" id="UP000001174">
    <property type="component" value="Chromosome"/>
</dbReference>
<dbReference type="GO" id="GO:0016020">
    <property type="term" value="C:membrane"/>
    <property type="evidence" value="ECO:0007669"/>
    <property type="project" value="GOC"/>
</dbReference>
<dbReference type="GO" id="GO:0008915">
    <property type="term" value="F:lipid-A-disaccharide synthase activity"/>
    <property type="evidence" value="ECO:0007669"/>
    <property type="project" value="UniProtKB-UniRule"/>
</dbReference>
<dbReference type="GO" id="GO:0005543">
    <property type="term" value="F:phospholipid binding"/>
    <property type="evidence" value="ECO:0007669"/>
    <property type="project" value="TreeGrafter"/>
</dbReference>
<dbReference type="GO" id="GO:0009245">
    <property type="term" value="P:lipid A biosynthetic process"/>
    <property type="evidence" value="ECO:0007669"/>
    <property type="project" value="UniProtKB-UniRule"/>
</dbReference>
<dbReference type="CDD" id="cd01635">
    <property type="entry name" value="Glycosyltransferase_GTB-type"/>
    <property type="match status" value="1"/>
</dbReference>
<dbReference type="Gene3D" id="3.40.50.2000">
    <property type="entry name" value="Glycogen Phosphorylase B"/>
    <property type="match status" value="2"/>
</dbReference>
<dbReference type="HAMAP" id="MF_00392">
    <property type="entry name" value="LpxB"/>
    <property type="match status" value="1"/>
</dbReference>
<dbReference type="InterPro" id="IPR003835">
    <property type="entry name" value="Glyco_trans_19"/>
</dbReference>
<dbReference type="NCBIfam" id="TIGR00215">
    <property type="entry name" value="lpxB"/>
    <property type="match status" value="1"/>
</dbReference>
<dbReference type="PANTHER" id="PTHR30372">
    <property type="entry name" value="LIPID-A-DISACCHARIDE SYNTHASE"/>
    <property type="match status" value="1"/>
</dbReference>
<dbReference type="PANTHER" id="PTHR30372:SF4">
    <property type="entry name" value="LIPID-A-DISACCHARIDE SYNTHASE, MITOCHONDRIAL-RELATED"/>
    <property type="match status" value="1"/>
</dbReference>
<dbReference type="Pfam" id="PF02684">
    <property type="entry name" value="LpxB"/>
    <property type="match status" value="1"/>
</dbReference>
<dbReference type="SUPFAM" id="SSF53756">
    <property type="entry name" value="UDP-Glycosyltransferase/glycogen phosphorylase"/>
    <property type="match status" value="1"/>
</dbReference>
<sequence>MRIGIVAGELSGDQLGGTLVEALKQKYPNAIIEGIGGPKMAAAGFKSLYPMDALSLIGFLEIISKGLRILSIRRKIINYFKQNKPDIFIGIDAPDFNLTVEKELRSAGIKTIHYVSPKIWVWREYRIKKIRKATDKILAILPFETEYYKNRHKFEAIYVGHPLAKNIPIHIDRAKYRDKLGLKGSSLPILSVLPGSRTTEVSRLLPLFLLALQKLVDAGYKFKAIMPLAKPSLKPLFAKYKEQIDSLGIEVFETNSHDVLKASDLSLLASGTATLEAMLCKLPMVVGYKLSWLSALIGRMLIGNHSYWAFPNILHKNEIIKELIQEDCTVDNLFSELKRLFDDKRRNDYIVEEFEKIHKEMVIDTESKIIQVLDTMIEKS</sequence>
<evidence type="ECO:0000255" key="1">
    <source>
        <dbReference type="HAMAP-Rule" id="MF_00392"/>
    </source>
</evidence>